<accession>Q8KDU6</accession>
<organism>
    <name type="scientific">Chlorobaculum tepidum (strain ATCC 49652 / DSM 12025 / NBRC 103806 / TLS)</name>
    <name type="common">Chlorobium tepidum</name>
    <dbReference type="NCBI Taxonomy" id="194439"/>
    <lineage>
        <taxon>Bacteria</taxon>
        <taxon>Pseudomonadati</taxon>
        <taxon>Chlorobiota</taxon>
        <taxon>Chlorobiia</taxon>
        <taxon>Chlorobiales</taxon>
        <taxon>Chlorobiaceae</taxon>
        <taxon>Chlorobaculum</taxon>
    </lineage>
</organism>
<name>COBS_CHLTE</name>
<sequence>MLSGLVTALRTLTALPVPGRDAERFSSSLYWFPVVGLVIGGIVVLLARAGMGVGWPELAAVLALLGGLILTRGLHADGLADLADGFFGGRTREAALRIMKDPNVGSFGSLALIGVMLFKWICLLELARAEAYGMIAAGAVLSRTAQVLLAARMPYARSDGGTAMAFVEDAGWPHLLVASISGVVLLFVLLDWQLAPSLILLFGSVVALFFVGWLSHRKIGGITGDVLGACSELVEAAVWLLAALWLKGLFWAIA</sequence>
<protein>
    <recommendedName>
        <fullName evidence="1">Adenosylcobinamide-GDP ribazoletransferase</fullName>
        <ecNumber evidence="1">2.7.8.26</ecNumber>
    </recommendedName>
    <alternativeName>
        <fullName evidence="1">Cobalamin synthase</fullName>
    </alternativeName>
    <alternativeName>
        <fullName evidence="1">Cobalamin-5'-phosphate synthase</fullName>
    </alternativeName>
</protein>
<reference key="1">
    <citation type="journal article" date="2002" name="Proc. Natl. Acad. Sci. U.S.A.">
        <title>The complete genome sequence of Chlorobium tepidum TLS, a photosynthetic, anaerobic, green-sulfur bacterium.</title>
        <authorList>
            <person name="Eisen J.A."/>
            <person name="Nelson K.E."/>
            <person name="Paulsen I.T."/>
            <person name="Heidelberg J.F."/>
            <person name="Wu M."/>
            <person name="Dodson R.J."/>
            <person name="DeBoy R.T."/>
            <person name="Gwinn M.L."/>
            <person name="Nelson W.C."/>
            <person name="Haft D.H."/>
            <person name="Hickey E.K."/>
            <person name="Peterson J.D."/>
            <person name="Durkin A.S."/>
            <person name="Kolonay J.F."/>
            <person name="Yang F."/>
            <person name="Holt I.E."/>
            <person name="Umayam L.A."/>
            <person name="Mason T.M."/>
            <person name="Brenner M."/>
            <person name="Shea T.P."/>
            <person name="Parksey D.S."/>
            <person name="Nierman W.C."/>
            <person name="Feldblyum T.V."/>
            <person name="Hansen C.L."/>
            <person name="Craven M.B."/>
            <person name="Radune D."/>
            <person name="Vamathevan J.J."/>
            <person name="Khouri H.M."/>
            <person name="White O."/>
            <person name="Gruber T.M."/>
            <person name="Ketchum K.A."/>
            <person name="Venter J.C."/>
            <person name="Tettelin H."/>
            <person name="Bryant D.A."/>
            <person name="Fraser C.M."/>
        </authorList>
    </citation>
    <scope>NUCLEOTIDE SEQUENCE [LARGE SCALE GENOMIC DNA]</scope>
    <source>
        <strain>ATCC 49652 / DSM 12025 / NBRC 103806 / TLS</strain>
    </source>
</reference>
<proteinExistence type="inferred from homology"/>
<keyword id="KW-0997">Cell inner membrane</keyword>
<keyword id="KW-1003">Cell membrane</keyword>
<keyword id="KW-0169">Cobalamin biosynthesis</keyword>
<keyword id="KW-0460">Magnesium</keyword>
<keyword id="KW-0472">Membrane</keyword>
<keyword id="KW-1185">Reference proteome</keyword>
<keyword id="KW-0808">Transferase</keyword>
<keyword id="KW-0812">Transmembrane</keyword>
<keyword id="KW-1133">Transmembrane helix</keyword>
<comment type="function">
    <text evidence="1">Joins adenosylcobinamide-GDP and alpha-ribazole to generate adenosylcobalamin (Ado-cobalamin). Also synthesizes adenosylcobalamin 5'-phosphate from adenosylcobinamide-GDP and alpha-ribazole 5'-phosphate.</text>
</comment>
<comment type="catalytic activity">
    <reaction evidence="1">
        <text>alpha-ribazole + adenosylcob(III)inamide-GDP = adenosylcob(III)alamin + GMP + H(+)</text>
        <dbReference type="Rhea" id="RHEA:16049"/>
        <dbReference type="ChEBI" id="CHEBI:10329"/>
        <dbReference type="ChEBI" id="CHEBI:15378"/>
        <dbReference type="ChEBI" id="CHEBI:18408"/>
        <dbReference type="ChEBI" id="CHEBI:58115"/>
        <dbReference type="ChEBI" id="CHEBI:60487"/>
        <dbReference type="EC" id="2.7.8.26"/>
    </reaction>
</comment>
<comment type="catalytic activity">
    <reaction evidence="1">
        <text>alpha-ribazole 5'-phosphate + adenosylcob(III)inamide-GDP = adenosylcob(III)alamin 5'-phosphate + GMP + H(+)</text>
        <dbReference type="Rhea" id="RHEA:23560"/>
        <dbReference type="ChEBI" id="CHEBI:15378"/>
        <dbReference type="ChEBI" id="CHEBI:57918"/>
        <dbReference type="ChEBI" id="CHEBI:58115"/>
        <dbReference type="ChEBI" id="CHEBI:60487"/>
        <dbReference type="ChEBI" id="CHEBI:60493"/>
        <dbReference type="EC" id="2.7.8.26"/>
    </reaction>
</comment>
<comment type="cofactor">
    <cofactor evidence="1">
        <name>Mg(2+)</name>
        <dbReference type="ChEBI" id="CHEBI:18420"/>
    </cofactor>
</comment>
<comment type="pathway">
    <text evidence="1">Cofactor biosynthesis; adenosylcobalamin biosynthesis; adenosylcobalamin from cob(II)yrinate a,c-diamide: step 7/7.</text>
</comment>
<comment type="subcellular location">
    <subcellularLocation>
        <location evidence="1">Cell inner membrane</location>
        <topology evidence="1">Multi-pass membrane protein</topology>
    </subcellularLocation>
</comment>
<comment type="similarity">
    <text evidence="1">Belongs to the CobS family.</text>
</comment>
<comment type="sequence caution" evidence="2">
    <conflict type="erroneous initiation">
        <sequence resource="EMBL-CDS" id="AAM72183"/>
    </conflict>
</comment>
<gene>
    <name evidence="1" type="primary">cobS</name>
    <name type="ordered locus">CT0948</name>
</gene>
<feature type="chain" id="PRO_0000146869" description="Adenosylcobinamide-GDP ribazoletransferase">
    <location>
        <begin position="1"/>
        <end position="254"/>
    </location>
</feature>
<feature type="transmembrane region" description="Helical" evidence="1">
    <location>
        <begin position="27"/>
        <end position="47"/>
    </location>
</feature>
<feature type="transmembrane region" description="Helical" evidence="1">
    <location>
        <begin position="50"/>
        <end position="70"/>
    </location>
</feature>
<feature type="transmembrane region" description="Helical" evidence="1">
    <location>
        <begin position="104"/>
        <end position="124"/>
    </location>
</feature>
<feature type="transmembrane region" description="Helical" evidence="1">
    <location>
        <begin position="131"/>
        <end position="151"/>
    </location>
</feature>
<feature type="transmembrane region" description="Helical" evidence="1">
    <location>
        <begin position="170"/>
        <end position="190"/>
    </location>
</feature>
<feature type="transmembrane region" description="Helical" evidence="1">
    <location>
        <begin position="194"/>
        <end position="214"/>
    </location>
</feature>
<feature type="transmembrane region" description="Helical" evidence="1">
    <location>
        <begin position="233"/>
        <end position="253"/>
    </location>
</feature>
<evidence type="ECO:0000255" key="1">
    <source>
        <dbReference type="HAMAP-Rule" id="MF_00719"/>
    </source>
</evidence>
<evidence type="ECO:0000305" key="2"/>
<dbReference type="EC" id="2.7.8.26" evidence="1"/>
<dbReference type="EMBL" id="AE006470">
    <property type="protein sequence ID" value="AAM72183.1"/>
    <property type="status" value="ALT_INIT"/>
    <property type="molecule type" value="Genomic_DNA"/>
</dbReference>
<dbReference type="RefSeq" id="NP_661841.1">
    <property type="nucleotide sequence ID" value="NC_002932.3"/>
</dbReference>
<dbReference type="RefSeq" id="WP_164926961.1">
    <property type="nucleotide sequence ID" value="NC_002932.3"/>
</dbReference>
<dbReference type="STRING" id="194439.CT0948"/>
<dbReference type="EnsemblBacteria" id="AAM72183">
    <property type="protein sequence ID" value="AAM72183"/>
    <property type="gene ID" value="CT0948"/>
</dbReference>
<dbReference type="KEGG" id="cte:CT0948"/>
<dbReference type="PATRIC" id="fig|194439.7.peg.859"/>
<dbReference type="eggNOG" id="COG0368">
    <property type="taxonomic scope" value="Bacteria"/>
</dbReference>
<dbReference type="HOGENOM" id="CLU_057426_1_1_10"/>
<dbReference type="OrthoDB" id="9794626at2"/>
<dbReference type="UniPathway" id="UPA00148">
    <property type="reaction ID" value="UER00238"/>
</dbReference>
<dbReference type="Proteomes" id="UP000001007">
    <property type="component" value="Chromosome"/>
</dbReference>
<dbReference type="GO" id="GO:0005886">
    <property type="term" value="C:plasma membrane"/>
    <property type="evidence" value="ECO:0007669"/>
    <property type="project" value="UniProtKB-SubCell"/>
</dbReference>
<dbReference type="GO" id="GO:0051073">
    <property type="term" value="F:adenosylcobinamide-GDP ribazoletransferase activity"/>
    <property type="evidence" value="ECO:0007669"/>
    <property type="project" value="UniProtKB-UniRule"/>
</dbReference>
<dbReference type="GO" id="GO:0008818">
    <property type="term" value="F:cobalamin 5'-phosphate synthase activity"/>
    <property type="evidence" value="ECO:0007669"/>
    <property type="project" value="UniProtKB-UniRule"/>
</dbReference>
<dbReference type="GO" id="GO:0009236">
    <property type="term" value="P:cobalamin biosynthetic process"/>
    <property type="evidence" value="ECO:0007669"/>
    <property type="project" value="UniProtKB-UniRule"/>
</dbReference>
<dbReference type="HAMAP" id="MF_00719">
    <property type="entry name" value="CobS"/>
    <property type="match status" value="1"/>
</dbReference>
<dbReference type="InterPro" id="IPR003805">
    <property type="entry name" value="CobS"/>
</dbReference>
<dbReference type="NCBIfam" id="TIGR00317">
    <property type="entry name" value="cobS"/>
    <property type="match status" value="1"/>
</dbReference>
<dbReference type="PANTHER" id="PTHR34148">
    <property type="entry name" value="ADENOSYLCOBINAMIDE-GDP RIBAZOLETRANSFERASE"/>
    <property type="match status" value="1"/>
</dbReference>
<dbReference type="PANTHER" id="PTHR34148:SF1">
    <property type="entry name" value="ADENOSYLCOBINAMIDE-GDP RIBAZOLETRANSFERASE"/>
    <property type="match status" value="1"/>
</dbReference>
<dbReference type="Pfam" id="PF02654">
    <property type="entry name" value="CobS"/>
    <property type="match status" value="1"/>
</dbReference>